<sequence length="278" mass="28770">MITGRTALYGVVGHPVAHSRSPEMQNAAFARLGVDAIYVALPVAPERIDEALRGAHALGFQGLNVTVPHKPRAASLCHALDPVATAVGAANTLRRTRDGWEGFNTDAPACRSLLEAAGVARGSRALLVGAGGAARAAAWALVQLGTELRVAARREEAAAELCRDLAAAVPGADLAAADFEDLEAEADAAAVVVNGTSVGLPGHEGRLPPLRFRADQVVLDFVYGDTDLARAARAAGARLVSGEQVLVRQGALAFTIWTGQPAPEADMARALEAREGAR</sequence>
<feature type="chain" id="PRO_1000100103" description="Shikimate dehydrogenase (NADP(+))">
    <location>
        <begin position="1"/>
        <end position="278"/>
    </location>
</feature>
<feature type="active site" description="Proton acceptor" evidence="1">
    <location>
        <position position="70"/>
    </location>
</feature>
<feature type="binding site" evidence="1">
    <location>
        <begin position="19"/>
        <end position="21"/>
    </location>
    <ligand>
        <name>shikimate</name>
        <dbReference type="ChEBI" id="CHEBI:36208"/>
    </ligand>
</feature>
<feature type="binding site" evidence="1">
    <location>
        <position position="66"/>
    </location>
    <ligand>
        <name>shikimate</name>
        <dbReference type="ChEBI" id="CHEBI:36208"/>
    </ligand>
</feature>
<feature type="binding site" evidence="1">
    <location>
        <position position="91"/>
    </location>
    <ligand>
        <name>shikimate</name>
        <dbReference type="ChEBI" id="CHEBI:36208"/>
    </ligand>
</feature>
<feature type="binding site" evidence="1">
    <location>
        <position position="106"/>
    </location>
    <ligand>
        <name>shikimate</name>
        <dbReference type="ChEBI" id="CHEBI:36208"/>
    </ligand>
</feature>
<feature type="binding site" evidence="1">
    <location>
        <begin position="129"/>
        <end position="133"/>
    </location>
    <ligand>
        <name>NADP(+)</name>
        <dbReference type="ChEBI" id="CHEBI:58349"/>
    </ligand>
</feature>
<feature type="binding site" evidence="1">
    <location>
        <position position="221"/>
    </location>
    <ligand>
        <name>NADP(+)</name>
        <dbReference type="ChEBI" id="CHEBI:58349"/>
    </ligand>
</feature>
<feature type="binding site" evidence="1">
    <location>
        <position position="223"/>
    </location>
    <ligand>
        <name>shikimate</name>
        <dbReference type="ChEBI" id="CHEBI:36208"/>
    </ligand>
</feature>
<feature type="binding site" evidence="1">
    <location>
        <position position="242"/>
    </location>
    <ligand>
        <name>NADP(+)</name>
        <dbReference type="ChEBI" id="CHEBI:58349"/>
    </ligand>
</feature>
<accession>B4ULJ2</accession>
<keyword id="KW-0028">Amino-acid biosynthesis</keyword>
<keyword id="KW-0057">Aromatic amino acid biosynthesis</keyword>
<keyword id="KW-0521">NADP</keyword>
<keyword id="KW-0560">Oxidoreductase</keyword>
<organism>
    <name type="scientific">Anaeromyxobacter sp. (strain K)</name>
    <dbReference type="NCBI Taxonomy" id="447217"/>
    <lineage>
        <taxon>Bacteria</taxon>
        <taxon>Pseudomonadati</taxon>
        <taxon>Myxococcota</taxon>
        <taxon>Myxococcia</taxon>
        <taxon>Myxococcales</taxon>
        <taxon>Cystobacterineae</taxon>
        <taxon>Anaeromyxobacteraceae</taxon>
        <taxon>Anaeromyxobacter</taxon>
    </lineage>
</organism>
<proteinExistence type="inferred from homology"/>
<comment type="function">
    <text evidence="1">Involved in the biosynthesis of the chorismate, which leads to the biosynthesis of aromatic amino acids. Catalyzes the reversible NADPH linked reduction of 3-dehydroshikimate (DHSA) to yield shikimate (SA).</text>
</comment>
<comment type="catalytic activity">
    <reaction evidence="1">
        <text>shikimate + NADP(+) = 3-dehydroshikimate + NADPH + H(+)</text>
        <dbReference type="Rhea" id="RHEA:17737"/>
        <dbReference type="ChEBI" id="CHEBI:15378"/>
        <dbReference type="ChEBI" id="CHEBI:16630"/>
        <dbReference type="ChEBI" id="CHEBI:36208"/>
        <dbReference type="ChEBI" id="CHEBI:57783"/>
        <dbReference type="ChEBI" id="CHEBI:58349"/>
        <dbReference type="EC" id="1.1.1.25"/>
    </reaction>
</comment>
<comment type="pathway">
    <text evidence="1">Metabolic intermediate biosynthesis; chorismate biosynthesis; chorismate from D-erythrose 4-phosphate and phosphoenolpyruvate: step 4/7.</text>
</comment>
<comment type="subunit">
    <text evidence="1">Homodimer.</text>
</comment>
<comment type="similarity">
    <text evidence="1">Belongs to the shikimate dehydrogenase family.</text>
</comment>
<dbReference type="EC" id="1.1.1.25" evidence="1"/>
<dbReference type="EMBL" id="CP001131">
    <property type="protein sequence ID" value="ACG71439.1"/>
    <property type="molecule type" value="Genomic_DNA"/>
</dbReference>
<dbReference type="RefSeq" id="WP_012524275.1">
    <property type="nucleotide sequence ID" value="NC_011145.1"/>
</dbReference>
<dbReference type="SMR" id="B4ULJ2"/>
<dbReference type="KEGG" id="ank:AnaeK_0196"/>
<dbReference type="HOGENOM" id="CLU_044063_4_1_7"/>
<dbReference type="OrthoDB" id="9792692at2"/>
<dbReference type="UniPathway" id="UPA00053">
    <property type="reaction ID" value="UER00087"/>
</dbReference>
<dbReference type="Proteomes" id="UP000001871">
    <property type="component" value="Chromosome"/>
</dbReference>
<dbReference type="GO" id="GO:0004764">
    <property type="term" value="F:shikimate 3-dehydrogenase (NADP+) activity"/>
    <property type="evidence" value="ECO:0007669"/>
    <property type="project" value="UniProtKB-UniRule"/>
</dbReference>
<dbReference type="GO" id="GO:0008652">
    <property type="term" value="P:amino acid biosynthetic process"/>
    <property type="evidence" value="ECO:0007669"/>
    <property type="project" value="UniProtKB-KW"/>
</dbReference>
<dbReference type="GO" id="GO:0009073">
    <property type="term" value="P:aromatic amino acid family biosynthetic process"/>
    <property type="evidence" value="ECO:0007669"/>
    <property type="project" value="UniProtKB-KW"/>
</dbReference>
<dbReference type="GO" id="GO:0009423">
    <property type="term" value="P:chorismate biosynthetic process"/>
    <property type="evidence" value="ECO:0007669"/>
    <property type="project" value="UniProtKB-UniRule"/>
</dbReference>
<dbReference type="GO" id="GO:0019632">
    <property type="term" value="P:shikimate metabolic process"/>
    <property type="evidence" value="ECO:0007669"/>
    <property type="project" value="TreeGrafter"/>
</dbReference>
<dbReference type="Gene3D" id="3.40.50.10860">
    <property type="entry name" value="Leucine Dehydrogenase, chain A, domain 1"/>
    <property type="match status" value="1"/>
</dbReference>
<dbReference type="Gene3D" id="3.40.50.720">
    <property type="entry name" value="NAD(P)-binding Rossmann-like Domain"/>
    <property type="match status" value="1"/>
</dbReference>
<dbReference type="HAMAP" id="MF_00222">
    <property type="entry name" value="Shikimate_DH_AroE"/>
    <property type="match status" value="1"/>
</dbReference>
<dbReference type="InterPro" id="IPR046346">
    <property type="entry name" value="Aminoacid_DH-like_N_sf"/>
</dbReference>
<dbReference type="InterPro" id="IPR036291">
    <property type="entry name" value="NAD(P)-bd_dom_sf"/>
</dbReference>
<dbReference type="InterPro" id="IPR041121">
    <property type="entry name" value="SDH_C"/>
</dbReference>
<dbReference type="InterPro" id="IPR013708">
    <property type="entry name" value="Shikimate_DH-bd_N"/>
</dbReference>
<dbReference type="InterPro" id="IPR022893">
    <property type="entry name" value="Shikimate_DH_fam"/>
</dbReference>
<dbReference type="PANTHER" id="PTHR21089:SF1">
    <property type="entry name" value="BIFUNCTIONAL 3-DEHYDROQUINATE DEHYDRATASE_SHIKIMATE DEHYDROGENASE, CHLOROPLASTIC"/>
    <property type="match status" value="1"/>
</dbReference>
<dbReference type="PANTHER" id="PTHR21089">
    <property type="entry name" value="SHIKIMATE DEHYDROGENASE"/>
    <property type="match status" value="1"/>
</dbReference>
<dbReference type="Pfam" id="PF18317">
    <property type="entry name" value="SDH_C"/>
    <property type="match status" value="1"/>
</dbReference>
<dbReference type="Pfam" id="PF08501">
    <property type="entry name" value="Shikimate_dh_N"/>
    <property type="match status" value="1"/>
</dbReference>
<dbReference type="SUPFAM" id="SSF53223">
    <property type="entry name" value="Aminoacid dehydrogenase-like, N-terminal domain"/>
    <property type="match status" value="1"/>
</dbReference>
<dbReference type="SUPFAM" id="SSF51735">
    <property type="entry name" value="NAD(P)-binding Rossmann-fold domains"/>
    <property type="match status" value="1"/>
</dbReference>
<gene>
    <name evidence="1" type="primary">aroE</name>
    <name type="ordered locus">AnaeK_0196</name>
</gene>
<evidence type="ECO:0000255" key="1">
    <source>
        <dbReference type="HAMAP-Rule" id="MF_00222"/>
    </source>
</evidence>
<protein>
    <recommendedName>
        <fullName evidence="1">Shikimate dehydrogenase (NADP(+))</fullName>
        <shortName evidence="1">SDH</shortName>
        <ecNumber evidence="1">1.1.1.25</ecNumber>
    </recommendedName>
</protein>
<name>AROE_ANASK</name>
<reference key="1">
    <citation type="submission" date="2008-08" db="EMBL/GenBank/DDBJ databases">
        <title>Complete sequence of Anaeromyxobacter sp. K.</title>
        <authorList>
            <consortium name="US DOE Joint Genome Institute"/>
            <person name="Lucas S."/>
            <person name="Copeland A."/>
            <person name="Lapidus A."/>
            <person name="Glavina del Rio T."/>
            <person name="Dalin E."/>
            <person name="Tice H."/>
            <person name="Bruce D."/>
            <person name="Goodwin L."/>
            <person name="Pitluck S."/>
            <person name="Saunders E."/>
            <person name="Brettin T."/>
            <person name="Detter J.C."/>
            <person name="Han C."/>
            <person name="Larimer F."/>
            <person name="Land M."/>
            <person name="Hauser L."/>
            <person name="Kyrpides N."/>
            <person name="Ovchinnikiva G."/>
            <person name="Beliaev A."/>
        </authorList>
    </citation>
    <scope>NUCLEOTIDE SEQUENCE [LARGE SCALE GENOMIC DNA]</scope>
    <source>
        <strain>K</strain>
    </source>
</reference>